<dbReference type="EC" id="1.8.4.12" evidence="1"/>
<dbReference type="EMBL" id="AP008934">
    <property type="protein sequence ID" value="BAE18461.1"/>
    <property type="molecule type" value="Genomic_DNA"/>
</dbReference>
<dbReference type="RefSeq" id="WP_002483290.1">
    <property type="nucleotide sequence ID" value="NZ_MTGA01000038.1"/>
</dbReference>
<dbReference type="SMR" id="Q49XN4"/>
<dbReference type="GeneID" id="66867547"/>
<dbReference type="KEGG" id="ssp:SSP1316"/>
<dbReference type="eggNOG" id="COG0229">
    <property type="taxonomic scope" value="Bacteria"/>
</dbReference>
<dbReference type="HOGENOM" id="CLU_031040_8_5_9"/>
<dbReference type="OrthoDB" id="4174719at2"/>
<dbReference type="Proteomes" id="UP000006371">
    <property type="component" value="Chromosome"/>
</dbReference>
<dbReference type="GO" id="GO:0005737">
    <property type="term" value="C:cytoplasm"/>
    <property type="evidence" value="ECO:0007669"/>
    <property type="project" value="TreeGrafter"/>
</dbReference>
<dbReference type="GO" id="GO:0033743">
    <property type="term" value="F:peptide-methionine (R)-S-oxide reductase activity"/>
    <property type="evidence" value="ECO:0007669"/>
    <property type="project" value="UniProtKB-UniRule"/>
</dbReference>
<dbReference type="GO" id="GO:0030091">
    <property type="term" value="P:protein repair"/>
    <property type="evidence" value="ECO:0007669"/>
    <property type="project" value="InterPro"/>
</dbReference>
<dbReference type="GO" id="GO:0006979">
    <property type="term" value="P:response to oxidative stress"/>
    <property type="evidence" value="ECO:0007669"/>
    <property type="project" value="InterPro"/>
</dbReference>
<dbReference type="FunFam" id="2.170.150.20:FF:000003">
    <property type="entry name" value="Peptide methionine sulfoxide reductase MsrB"/>
    <property type="match status" value="1"/>
</dbReference>
<dbReference type="Gene3D" id="2.170.150.20">
    <property type="entry name" value="Peptide methionine sulfoxide reductase"/>
    <property type="match status" value="1"/>
</dbReference>
<dbReference type="HAMAP" id="MF_01400">
    <property type="entry name" value="MsrB"/>
    <property type="match status" value="1"/>
</dbReference>
<dbReference type="InterPro" id="IPR028427">
    <property type="entry name" value="Met_Sox_Rdtase_MsrB"/>
</dbReference>
<dbReference type="InterPro" id="IPR002579">
    <property type="entry name" value="Met_Sox_Rdtase_MsrB_dom"/>
</dbReference>
<dbReference type="InterPro" id="IPR011057">
    <property type="entry name" value="Mss4-like_sf"/>
</dbReference>
<dbReference type="NCBIfam" id="TIGR00357">
    <property type="entry name" value="peptide-methionine (R)-S-oxide reductase MsrB"/>
    <property type="match status" value="1"/>
</dbReference>
<dbReference type="PANTHER" id="PTHR10173">
    <property type="entry name" value="METHIONINE SULFOXIDE REDUCTASE"/>
    <property type="match status" value="1"/>
</dbReference>
<dbReference type="PANTHER" id="PTHR10173:SF59">
    <property type="entry name" value="PEPTIDE METHIONINE SULFOXIDE REDUCTASE MSRA_MSRB"/>
    <property type="match status" value="1"/>
</dbReference>
<dbReference type="Pfam" id="PF01641">
    <property type="entry name" value="SelR"/>
    <property type="match status" value="1"/>
</dbReference>
<dbReference type="SUPFAM" id="SSF51316">
    <property type="entry name" value="Mss4-like"/>
    <property type="match status" value="1"/>
</dbReference>
<dbReference type="PROSITE" id="PS51790">
    <property type="entry name" value="MSRB"/>
    <property type="match status" value="1"/>
</dbReference>
<comment type="catalytic activity">
    <reaction evidence="1">
        <text>L-methionyl-[protein] + [thioredoxin]-disulfide + H2O = L-methionyl-(R)-S-oxide-[protein] + [thioredoxin]-dithiol</text>
        <dbReference type="Rhea" id="RHEA:24164"/>
        <dbReference type="Rhea" id="RHEA-COMP:10698"/>
        <dbReference type="Rhea" id="RHEA-COMP:10700"/>
        <dbReference type="Rhea" id="RHEA-COMP:12313"/>
        <dbReference type="Rhea" id="RHEA-COMP:12314"/>
        <dbReference type="ChEBI" id="CHEBI:15377"/>
        <dbReference type="ChEBI" id="CHEBI:16044"/>
        <dbReference type="ChEBI" id="CHEBI:29950"/>
        <dbReference type="ChEBI" id="CHEBI:45764"/>
        <dbReference type="ChEBI" id="CHEBI:50058"/>
        <dbReference type="EC" id="1.8.4.12"/>
    </reaction>
</comment>
<comment type="similarity">
    <text evidence="1">Belongs to the MsrB Met sulfoxide reductase family.</text>
</comment>
<sequence length="142" mass="16303">MIKKNKNDLNEMEYLVTQENGTEPPFQNEYWNHFEKGIYVDKISGKPLFTSEEKFESDCGWPSFSKALADEEIVELVDKTFGMVRTEVRSEDANSHLGHVFNDGPKESGGLRYCINSAAVQFIPYEKLEELGYGDLIPHFEK</sequence>
<proteinExistence type="inferred from homology"/>
<evidence type="ECO:0000255" key="1">
    <source>
        <dbReference type="HAMAP-Rule" id="MF_01400"/>
    </source>
</evidence>
<evidence type="ECO:0000255" key="2">
    <source>
        <dbReference type="PROSITE-ProRule" id="PRU01126"/>
    </source>
</evidence>
<feature type="chain" id="PRO_0000140304" description="Peptide methionine sulfoxide reductase MsrB">
    <location>
        <begin position="1"/>
        <end position="142"/>
    </location>
</feature>
<feature type="domain" description="MsrB" evidence="2">
    <location>
        <begin position="2"/>
        <end position="125"/>
    </location>
</feature>
<feature type="active site" description="Nucleophile" evidence="2">
    <location>
        <position position="114"/>
    </location>
</feature>
<gene>
    <name evidence="1" type="primary">msrB</name>
    <name type="ordered locus">SSP1316</name>
</gene>
<organism>
    <name type="scientific">Staphylococcus saprophyticus subsp. saprophyticus (strain ATCC 15305 / DSM 20229 / NCIMB 8711 / NCTC 7292 / S-41)</name>
    <dbReference type="NCBI Taxonomy" id="342451"/>
    <lineage>
        <taxon>Bacteria</taxon>
        <taxon>Bacillati</taxon>
        <taxon>Bacillota</taxon>
        <taxon>Bacilli</taxon>
        <taxon>Bacillales</taxon>
        <taxon>Staphylococcaceae</taxon>
        <taxon>Staphylococcus</taxon>
    </lineage>
</organism>
<name>MSRB_STAS1</name>
<keyword id="KW-0560">Oxidoreductase</keyword>
<keyword id="KW-1185">Reference proteome</keyword>
<protein>
    <recommendedName>
        <fullName evidence="1">Peptide methionine sulfoxide reductase MsrB</fullName>
        <ecNumber evidence="1">1.8.4.12</ecNumber>
    </recommendedName>
    <alternativeName>
        <fullName evidence="1">Peptide-methionine (R)-S-oxide reductase</fullName>
    </alternativeName>
</protein>
<reference key="1">
    <citation type="journal article" date="2005" name="Proc. Natl. Acad. Sci. U.S.A.">
        <title>Whole genome sequence of Staphylococcus saprophyticus reveals the pathogenesis of uncomplicated urinary tract infection.</title>
        <authorList>
            <person name="Kuroda M."/>
            <person name="Yamashita A."/>
            <person name="Hirakawa H."/>
            <person name="Kumano M."/>
            <person name="Morikawa K."/>
            <person name="Higashide M."/>
            <person name="Maruyama A."/>
            <person name="Inose Y."/>
            <person name="Matoba K."/>
            <person name="Toh H."/>
            <person name="Kuhara S."/>
            <person name="Hattori M."/>
            <person name="Ohta T."/>
        </authorList>
    </citation>
    <scope>NUCLEOTIDE SEQUENCE [LARGE SCALE GENOMIC DNA]</scope>
    <source>
        <strain>ATCC 15305 / DSM 20229 / NCIMB 8711 / NCTC 7292 / S-41</strain>
    </source>
</reference>
<accession>Q49XN4</accession>